<gene>
    <name type="ORF">SPAC17A5.08</name>
</gene>
<evidence type="ECO:0000250" key="1"/>
<evidence type="ECO:0000255" key="2"/>
<evidence type="ECO:0000255" key="3">
    <source>
        <dbReference type="PROSITE-ProRule" id="PRU00096"/>
    </source>
</evidence>
<evidence type="ECO:0000305" key="4"/>
<dbReference type="EMBL" id="CU329670">
    <property type="protein sequence ID" value="CAB11508.1"/>
    <property type="molecule type" value="Genomic_DNA"/>
</dbReference>
<dbReference type="PIR" id="T37823">
    <property type="entry name" value="T37823"/>
</dbReference>
<dbReference type="RefSeq" id="NP_593476.1">
    <property type="nucleotide sequence ID" value="NM_001018909.2"/>
</dbReference>
<dbReference type="SMR" id="O13770"/>
<dbReference type="BioGRID" id="278901">
    <property type="interactions" value="60"/>
</dbReference>
<dbReference type="FunCoup" id="O13770">
    <property type="interactions" value="232"/>
</dbReference>
<dbReference type="STRING" id="284812.O13770"/>
<dbReference type="iPTMnet" id="O13770"/>
<dbReference type="PaxDb" id="4896-SPAC17A5.08.1"/>
<dbReference type="EnsemblFungi" id="SPAC17A5.08.1">
    <property type="protein sequence ID" value="SPAC17A5.08.1:pep"/>
    <property type="gene ID" value="SPAC17A5.08"/>
</dbReference>
<dbReference type="PomBase" id="SPAC17A5.08"/>
<dbReference type="VEuPathDB" id="FungiDB:SPAC17A5.08"/>
<dbReference type="eggNOG" id="KOG1693">
    <property type="taxonomic scope" value="Eukaryota"/>
</dbReference>
<dbReference type="HOGENOM" id="CLU_066963_4_2_1"/>
<dbReference type="InParanoid" id="O13770"/>
<dbReference type="OMA" id="VGEYTFC"/>
<dbReference type="PhylomeDB" id="O13770"/>
<dbReference type="Reactome" id="R-SPO-6807878">
    <property type="pathway name" value="COPI-mediated anterograde transport"/>
</dbReference>
<dbReference type="Reactome" id="R-SPO-6811434">
    <property type="pathway name" value="COPI-dependent Golgi-to-ER retrograde traffic"/>
</dbReference>
<dbReference type="PRO" id="PR:O13770"/>
<dbReference type="Proteomes" id="UP000002485">
    <property type="component" value="Chromosome I"/>
</dbReference>
<dbReference type="GO" id="GO:0030134">
    <property type="term" value="C:COPII-coated ER to Golgi transport vesicle"/>
    <property type="evidence" value="ECO:0000318"/>
    <property type="project" value="GO_Central"/>
</dbReference>
<dbReference type="GO" id="GO:0005783">
    <property type="term" value="C:endoplasmic reticulum"/>
    <property type="evidence" value="ECO:0007005"/>
    <property type="project" value="PomBase"/>
</dbReference>
<dbReference type="GO" id="GO:0005789">
    <property type="term" value="C:endoplasmic reticulum membrane"/>
    <property type="evidence" value="ECO:0007669"/>
    <property type="project" value="UniProtKB-SubCell"/>
</dbReference>
<dbReference type="GO" id="GO:0005793">
    <property type="term" value="C:endoplasmic reticulum-Golgi intermediate compartment"/>
    <property type="evidence" value="ECO:0000318"/>
    <property type="project" value="GO_Central"/>
</dbReference>
<dbReference type="GO" id="GO:0005794">
    <property type="term" value="C:Golgi apparatus"/>
    <property type="evidence" value="ECO:0007005"/>
    <property type="project" value="PomBase"/>
</dbReference>
<dbReference type="GO" id="GO:0006888">
    <property type="term" value="P:endoplasmic reticulum to Golgi vesicle-mediated transport"/>
    <property type="evidence" value="ECO:0000318"/>
    <property type="project" value="GO_Central"/>
</dbReference>
<dbReference type="GO" id="GO:0007030">
    <property type="term" value="P:Golgi organization"/>
    <property type="evidence" value="ECO:0000318"/>
    <property type="project" value="GO_Central"/>
</dbReference>
<dbReference type="GO" id="GO:0006886">
    <property type="term" value="P:intracellular protein transport"/>
    <property type="evidence" value="ECO:0000318"/>
    <property type="project" value="GO_Central"/>
</dbReference>
<dbReference type="GO" id="GO:0006621">
    <property type="term" value="P:protein retention in ER lumen"/>
    <property type="evidence" value="ECO:0000318"/>
    <property type="project" value="GO_Central"/>
</dbReference>
<dbReference type="InterPro" id="IPR015720">
    <property type="entry name" value="Emp24-like"/>
</dbReference>
<dbReference type="InterPro" id="IPR009038">
    <property type="entry name" value="GOLD_dom"/>
</dbReference>
<dbReference type="InterPro" id="IPR036598">
    <property type="entry name" value="GOLD_dom_sf"/>
</dbReference>
<dbReference type="PANTHER" id="PTHR22811">
    <property type="entry name" value="TRANSMEMBRANE EMP24 DOMAIN-CONTAINING PROTEIN"/>
    <property type="match status" value="1"/>
</dbReference>
<dbReference type="Pfam" id="PF01105">
    <property type="entry name" value="EMP24_GP25L"/>
    <property type="match status" value="1"/>
</dbReference>
<dbReference type="SMART" id="SM01190">
    <property type="entry name" value="EMP24_GP25L"/>
    <property type="match status" value="1"/>
</dbReference>
<dbReference type="SUPFAM" id="SSF101576">
    <property type="entry name" value="Supernatant protein factor (SPF), C-terminal domain"/>
    <property type="match status" value="1"/>
</dbReference>
<dbReference type="PROSITE" id="PS50866">
    <property type="entry name" value="GOLD"/>
    <property type="match status" value="1"/>
</dbReference>
<feature type="signal peptide" evidence="2">
    <location>
        <begin position="1"/>
        <end position="20"/>
    </location>
</feature>
<feature type="chain" id="PRO_0000010415" description="Uncharacterized membrane protein C17A5.08">
    <location>
        <begin position="21"/>
        <end position="210"/>
    </location>
</feature>
<feature type="topological domain" description="Lumenal" evidence="2">
    <location>
        <begin position="21"/>
        <end position="175"/>
    </location>
</feature>
<feature type="transmembrane region" description="Helical" evidence="2">
    <location>
        <begin position="176"/>
        <end position="196"/>
    </location>
</feature>
<feature type="topological domain" description="Cytoplasmic" evidence="2">
    <location>
        <begin position="197"/>
        <end position="210"/>
    </location>
</feature>
<feature type="domain" description="GOLD" evidence="3">
    <location>
        <begin position="32"/>
        <end position="115"/>
    </location>
</feature>
<feature type="glycosylation site" description="N-linked (GlcNAc...) asparagine" evidence="2">
    <location>
        <position position="165"/>
    </location>
</feature>
<keyword id="KW-0256">Endoplasmic reticulum</keyword>
<keyword id="KW-0325">Glycoprotein</keyword>
<keyword id="KW-0472">Membrane</keyword>
<keyword id="KW-1185">Reference proteome</keyword>
<keyword id="KW-0732">Signal</keyword>
<keyword id="KW-0812">Transmembrane</keyword>
<keyword id="KW-1133">Transmembrane helix</keyword>
<organism>
    <name type="scientific">Schizosaccharomyces pombe (strain 972 / ATCC 24843)</name>
    <name type="common">Fission yeast</name>
    <dbReference type="NCBI Taxonomy" id="284812"/>
    <lineage>
        <taxon>Eukaryota</taxon>
        <taxon>Fungi</taxon>
        <taxon>Dikarya</taxon>
        <taxon>Ascomycota</taxon>
        <taxon>Taphrinomycotina</taxon>
        <taxon>Schizosaccharomycetes</taxon>
        <taxon>Schizosaccharomycetales</taxon>
        <taxon>Schizosaccharomycetaceae</taxon>
        <taxon>Schizosaccharomyces</taxon>
    </lineage>
</organism>
<proteinExistence type="inferred from homology"/>
<reference key="1">
    <citation type="journal article" date="2002" name="Nature">
        <title>The genome sequence of Schizosaccharomyces pombe.</title>
        <authorList>
            <person name="Wood V."/>
            <person name="Gwilliam R."/>
            <person name="Rajandream M.A."/>
            <person name="Lyne M.H."/>
            <person name="Lyne R."/>
            <person name="Stewart A."/>
            <person name="Sgouros J.G."/>
            <person name="Peat N."/>
            <person name="Hayles J."/>
            <person name="Baker S.G."/>
            <person name="Basham D."/>
            <person name="Bowman S."/>
            <person name="Brooks K."/>
            <person name="Brown D."/>
            <person name="Brown S."/>
            <person name="Chillingworth T."/>
            <person name="Churcher C.M."/>
            <person name="Collins M."/>
            <person name="Connor R."/>
            <person name="Cronin A."/>
            <person name="Davis P."/>
            <person name="Feltwell T."/>
            <person name="Fraser A."/>
            <person name="Gentles S."/>
            <person name="Goble A."/>
            <person name="Hamlin N."/>
            <person name="Harris D.E."/>
            <person name="Hidalgo J."/>
            <person name="Hodgson G."/>
            <person name="Holroyd S."/>
            <person name="Hornsby T."/>
            <person name="Howarth S."/>
            <person name="Huckle E.J."/>
            <person name="Hunt S."/>
            <person name="Jagels K."/>
            <person name="James K.D."/>
            <person name="Jones L."/>
            <person name="Jones M."/>
            <person name="Leather S."/>
            <person name="McDonald S."/>
            <person name="McLean J."/>
            <person name="Mooney P."/>
            <person name="Moule S."/>
            <person name="Mungall K.L."/>
            <person name="Murphy L.D."/>
            <person name="Niblett D."/>
            <person name="Odell C."/>
            <person name="Oliver K."/>
            <person name="O'Neil S."/>
            <person name="Pearson D."/>
            <person name="Quail M.A."/>
            <person name="Rabbinowitsch E."/>
            <person name="Rutherford K.M."/>
            <person name="Rutter S."/>
            <person name="Saunders D."/>
            <person name="Seeger K."/>
            <person name="Sharp S."/>
            <person name="Skelton J."/>
            <person name="Simmonds M.N."/>
            <person name="Squares R."/>
            <person name="Squares S."/>
            <person name="Stevens K."/>
            <person name="Taylor K."/>
            <person name="Taylor R.G."/>
            <person name="Tivey A."/>
            <person name="Walsh S.V."/>
            <person name="Warren T."/>
            <person name="Whitehead S."/>
            <person name="Woodward J.R."/>
            <person name="Volckaert G."/>
            <person name="Aert R."/>
            <person name="Robben J."/>
            <person name="Grymonprez B."/>
            <person name="Weltjens I."/>
            <person name="Vanstreels E."/>
            <person name="Rieger M."/>
            <person name="Schaefer M."/>
            <person name="Mueller-Auer S."/>
            <person name="Gabel C."/>
            <person name="Fuchs M."/>
            <person name="Duesterhoeft A."/>
            <person name="Fritzc C."/>
            <person name="Holzer E."/>
            <person name="Moestl D."/>
            <person name="Hilbert H."/>
            <person name="Borzym K."/>
            <person name="Langer I."/>
            <person name="Beck A."/>
            <person name="Lehrach H."/>
            <person name="Reinhardt R."/>
            <person name="Pohl T.M."/>
            <person name="Eger P."/>
            <person name="Zimmermann W."/>
            <person name="Wedler H."/>
            <person name="Wambutt R."/>
            <person name="Purnelle B."/>
            <person name="Goffeau A."/>
            <person name="Cadieu E."/>
            <person name="Dreano S."/>
            <person name="Gloux S."/>
            <person name="Lelaure V."/>
            <person name="Mottier S."/>
            <person name="Galibert F."/>
            <person name="Aves S.J."/>
            <person name="Xiang Z."/>
            <person name="Hunt C."/>
            <person name="Moore K."/>
            <person name="Hurst S.M."/>
            <person name="Lucas M."/>
            <person name="Rochet M."/>
            <person name="Gaillardin C."/>
            <person name="Tallada V.A."/>
            <person name="Garzon A."/>
            <person name="Thode G."/>
            <person name="Daga R.R."/>
            <person name="Cruzado L."/>
            <person name="Jimenez J."/>
            <person name="Sanchez M."/>
            <person name="del Rey F."/>
            <person name="Benito J."/>
            <person name="Dominguez A."/>
            <person name="Revuelta J.L."/>
            <person name="Moreno S."/>
            <person name="Armstrong J."/>
            <person name="Forsburg S.L."/>
            <person name="Cerutti L."/>
            <person name="Lowe T."/>
            <person name="McCombie W.R."/>
            <person name="Paulsen I."/>
            <person name="Potashkin J."/>
            <person name="Shpakovski G.V."/>
            <person name="Ussery D."/>
            <person name="Barrell B.G."/>
            <person name="Nurse P."/>
        </authorList>
    </citation>
    <scope>NUCLEOTIDE SEQUENCE [LARGE SCALE GENOMIC DNA]</scope>
    <source>
        <strain>972 / ATCC 24843</strain>
    </source>
</reference>
<name>YE98_SCHPO</name>
<comment type="subcellular location">
    <subcellularLocation>
        <location evidence="1">Endoplasmic reticulum membrane</location>
        <topology evidence="1">Single-pass type I membrane protein</topology>
    </subcellularLocation>
</comment>
<comment type="similarity">
    <text evidence="4">Belongs to the EMP24/GP25L family.</text>
</comment>
<accession>O13770</accession>
<protein>
    <recommendedName>
        <fullName>Uncharacterized membrane protein C17A5.08</fullName>
    </recommendedName>
</protein>
<sequence>MRVITLSGITLFLLASLASAIELTFKLENQEKQCYYLDSFHTGEKTHFTYAVQSGGSFDVDYMIKAPSQKTVALGKKRRQADVFFTLEEKGEYEFCFDNHMSTFTDKIVTMEITMENELSLPALTRDEAKDYKKDSMQSTVLEISTALSEIDRVQNYFKTREHRNYSTVKSTQARIFWFSLAESIMVVALSALQVFIVKTFFKRSGRRGV</sequence>